<evidence type="ECO:0000255" key="1">
    <source>
        <dbReference type="HAMAP-Rule" id="MF_01395"/>
    </source>
</evidence>
<evidence type="ECO:0000255" key="2">
    <source>
        <dbReference type="PROSITE-ProRule" id="PRU01136"/>
    </source>
</evidence>
<evidence type="ECO:0000256" key="3">
    <source>
        <dbReference type="SAM" id="MobiDB-lite"/>
    </source>
</evidence>
<dbReference type="EC" id="2.1.3.15" evidence="1"/>
<dbReference type="EMBL" id="CP001063">
    <property type="protein sequence ID" value="ACD08060.1"/>
    <property type="molecule type" value="Genomic_DNA"/>
</dbReference>
<dbReference type="RefSeq" id="WP_000118396.1">
    <property type="nucleotide sequence ID" value="NC_010658.1"/>
</dbReference>
<dbReference type="SMR" id="B2TW98"/>
<dbReference type="STRING" id="344609.SbBS512_E2694"/>
<dbReference type="KEGG" id="sbc:SbBS512_E2694"/>
<dbReference type="HOGENOM" id="CLU_015486_1_0_6"/>
<dbReference type="UniPathway" id="UPA00655">
    <property type="reaction ID" value="UER00711"/>
</dbReference>
<dbReference type="Proteomes" id="UP000001030">
    <property type="component" value="Chromosome"/>
</dbReference>
<dbReference type="GO" id="GO:0009329">
    <property type="term" value="C:acetate CoA-transferase complex"/>
    <property type="evidence" value="ECO:0007669"/>
    <property type="project" value="TreeGrafter"/>
</dbReference>
<dbReference type="GO" id="GO:0003989">
    <property type="term" value="F:acetyl-CoA carboxylase activity"/>
    <property type="evidence" value="ECO:0007669"/>
    <property type="project" value="InterPro"/>
</dbReference>
<dbReference type="GO" id="GO:0005524">
    <property type="term" value="F:ATP binding"/>
    <property type="evidence" value="ECO:0007669"/>
    <property type="project" value="UniProtKB-KW"/>
</dbReference>
<dbReference type="GO" id="GO:0016743">
    <property type="term" value="F:carboxyl- or carbamoyltransferase activity"/>
    <property type="evidence" value="ECO:0007669"/>
    <property type="project" value="UniProtKB-UniRule"/>
</dbReference>
<dbReference type="GO" id="GO:0008270">
    <property type="term" value="F:zinc ion binding"/>
    <property type="evidence" value="ECO:0007669"/>
    <property type="project" value="UniProtKB-UniRule"/>
</dbReference>
<dbReference type="GO" id="GO:0006633">
    <property type="term" value="P:fatty acid biosynthetic process"/>
    <property type="evidence" value="ECO:0007669"/>
    <property type="project" value="UniProtKB-KW"/>
</dbReference>
<dbReference type="GO" id="GO:2001295">
    <property type="term" value="P:malonyl-CoA biosynthetic process"/>
    <property type="evidence" value="ECO:0007669"/>
    <property type="project" value="UniProtKB-UniRule"/>
</dbReference>
<dbReference type="FunFam" id="3.90.226.10:FF:000013">
    <property type="entry name" value="Acetyl-coenzyme A carboxylase carboxyl transferase subunit beta"/>
    <property type="match status" value="1"/>
</dbReference>
<dbReference type="Gene3D" id="3.90.226.10">
    <property type="entry name" value="2-enoyl-CoA Hydratase, Chain A, domain 1"/>
    <property type="match status" value="1"/>
</dbReference>
<dbReference type="HAMAP" id="MF_01395">
    <property type="entry name" value="AcetylCoA_CT_beta"/>
    <property type="match status" value="1"/>
</dbReference>
<dbReference type="InterPro" id="IPR034733">
    <property type="entry name" value="AcCoA_carboxyl_beta"/>
</dbReference>
<dbReference type="InterPro" id="IPR000438">
    <property type="entry name" value="Acetyl_CoA_COase_Trfase_b_su"/>
</dbReference>
<dbReference type="InterPro" id="IPR029045">
    <property type="entry name" value="ClpP/crotonase-like_dom_sf"/>
</dbReference>
<dbReference type="InterPro" id="IPR011762">
    <property type="entry name" value="COA_CT_N"/>
</dbReference>
<dbReference type="InterPro" id="IPR041010">
    <property type="entry name" value="Znf-ACC"/>
</dbReference>
<dbReference type="NCBIfam" id="TIGR00515">
    <property type="entry name" value="accD"/>
    <property type="match status" value="1"/>
</dbReference>
<dbReference type="PANTHER" id="PTHR42995">
    <property type="entry name" value="ACETYL-COENZYME A CARBOXYLASE CARBOXYL TRANSFERASE SUBUNIT BETA, CHLOROPLASTIC"/>
    <property type="match status" value="1"/>
</dbReference>
<dbReference type="PANTHER" id="PTHR42995:SF5">
    <property type="entry name" value="ACETYL-COENZYME A CARBOXYLASE CARBOXYL TRANSFERASE SUBUNIT BETA, CHLOROPLASTIC"/>
    <property type="match status" value="1"/>
</dbReference>
<dbReference type="Pfam" id="PF01039">
    <property type="entry name" value="Carboxyl_trans"/>
    <property type="match status" value="1"/>
</dbReference>
<dbReference type="Pfam" id="PF17848">
    <property type="entry name" value="Zn_ribbon_ACC"/>
    <property type="match status" value="1"/>
</dbReference>
<dbReference type="PRINTS" id="PR01070">
    <property type="entry name" value="ACCCTRFRASEB"/>
</dbReference>
<dbReference type="SUPFAM" id="SSF52096">
    <property type="entry name" value="ClpP/crotonase"/>
    <property type="match status" value="1"/>
</dbReference>
<dbReference type="PROSITE" id="PS50980">
    <property type="entry name" value="COA_CT_NTER"/>
    <property type="match status" value="1"/>
</dbReference>
<keyword id="KW-0067">ATP-binding</keyword>
<keyword id="KW-0963">Cytoplasm</keyword>
<keyword id="KW-0275">Fatty acid biosynthesis</keyword>
<keyword id="KW-0276">Fatty acid metabolism</keyword>
<keyword id="KW-0444">Lipid biosynthesis</keyword>
<keyword id="KW-0443">Lipid metabolism</keyword>
<keyword id="KW-0479">Metal-binding</keyword>
<keyword id="KW-0547">Nucleotide-binding</keyword>
<keyword id="KW-1185">Reference proteome</keyword>
<keyword id="KW-0808">Transferase</keyword>
<keyword id="KW-0862">Zinc</keyword>
<keyword id="KW-0863">Zinc-finger</keyword>
<accession>B2TW98</accession>
<protein>
    <recommendedName>
        <fullName evidence="1">Acetyl-coenzyme A carboxylase carboxyl transferase subunit beta</fullName>
        <shortName evidence="1">ACCase subunit beta</shortName>
        <shortName evidence="1">Acetyl-CoA carboxylase carboxyltransferase subunit beta</shortName>
        <ecNumber evidence="1">2.1.3.15</ecNumber>
    </recommendedName>
</protein>
<feature type="chain" id="PRO_0000359063" description="Acetyl-coenzyme A carboxylase carboxyl transferase subunit beta">
    <location>
        <begin position="1"/>
        <end position="304"/>
    </location>
</feature>
<feature type="domain" description="CoA carboxyltransferase N-terminal" evidence="2">
    <location>
        <begin position="23"/>
        <end position="292"/>
    </location>
</feature>
<feature type="zinc finger region" description="C4-type" evidence="1">
    <location>
        <begin position="27"/>
        <end position="49"/>
    </location>
</feature>
<feature type="region of interest" description="Disordered" evidence="3">
    <location>
        <begin position="284"/>
        <end position="304"/>
    </location>
</feature>
<feature type="compositionally biased region" description="Pro residues" evidence="3">
    <location>
        <begin position="295"/>
        <end position="304"/>
    </location>
</feature>
<feature type="binding site" evidence="1">
    <location>
        <position position="27"/>
    </location>
    <ligand>
        <name>Zn(2+)</name>
        <dbReference type="ChEBI" id="CHEBI:29105"/>
    </ligand>
</feature>
<feature type="binding site" evidence="1">
    <location>
        <position position="30"/>
    </location>
    <ligand>
        <name>Zn(2+)</name>
        <dbReference type="ChEBI" id="CHEBI:29105"/>
    </ligand>
</feature>
<feature type="binding site" evidence="1">
    <location>
        <position position="46"/>
    </location>
    <ligand>
        <name>Zn(2+)</name>
        <dbReference type="ChEBI" id="CHEBI:29105"/>
    </ligand>
</feature>
<feature type="binding site" evidence="1">
    <location>
        <position position="49"/>
    </location>
    <ligand>
        <name>Zn(2+)</name>
        <dbReference type="ChEBI" id="CHEBI:29105"/>
    </ligand>
</feature>
<gene>
    <name evidence="1" type="primary">accD</name>
    <name type="ordered locus">SbBS512_E2694</name>
</gene>
<organism>
    <name type="scientific">Shigella boydii serotype 18 (strain CDC 3083-94 / BS512)</name>
    <dbReference type="NCBI Taxonomy" id="344609"/>
    <lineage>
        <taxon>Bacteria</taxon>
        <taxon>Pseudomonadati</taxon>
        <taxon>Pseudomonadota</taxon>
        <taxon>Gammaproteobacteria</taxon>
        <taxon>Enterobacterales</taxon>
        <taxon>Enterobacteriaceae</taxon>
        <taxon>Shigella</taxon>
    </lineage>
</organism>
<reference key="1">
    <citation type="submission" date="2008-05" db="EMBL/GenBank/DDBJ databases">
        <title>Complete sequence of Shigella boydii serotype 18 strain BS512.</title>
        <authorList>
            <person name="Rasko D.A."/>
            <person name="Rosovitz M."/>
            <person name="Maurelli A.T."/>
            <person name="Myers G."/>
            <person name="Seshadri R."/>
            <person name="Cer R."/>
            <person name="Jiang L."/>
            <person name="Ravel J."/>
            <person name="Sebastian Y."/>
        </authorList>
    </citation>
    <scope>NUCLEOTIDE SEQUENCE [LARGE SCALE GENOMIC DNA]</scope>
    <source>
        <strain>CDC 3083-94 / BS512</strain>
    </source>
</reference>
<proteinExistence type="inferred from homology"/>
<sequence length="304" mass="33338">MSWIERIKSNITPTRKASIPEGVWTKCDSCGQVLYRAELERNLEVCPKCDHHMRMTARNRLHSLLDEGSLVELGSELEPKDVLKFRDSKKYKDRLASAQKETGEKDALVVMKGTLYGMPVVAAAFEFAFMGGSMGSVVGARFVRAVEQALEDNCPLICFSASGGARMQEALMSLMQMAKTSAALAKMQERGLPYISVLTDPTMGGVSASFAMLGDLNIAEPKALIGFAGPRVIEQTVREKLPLGFQRSEFLIEKGAIDMIVRRPEMRLKLASILAKLMNLPAPNPEAPREGVVVPPVPDQEPEA</sequence>
<comment type="function">
    <text evidence="1">Component of the acetyl coenzyme A carboxylase (ACC) complex. Biotin carboxylase (BC) catalyzes the carboxylation of biotin on its carrier protein (BCCP) and then the CO(2) group is transferred by the transcarboxylase to acetyl-CoA to form malonyl-CoA.</text>
</comment>
<comment type="catalytic activity">
    <reaction evidence="1">
        <text>N(6)-carboxybiotinyl-L-lysyl-[protein] + acetyl-CoA = N(6)-biotinyl-L-lysyl-[protein] + malonyl-CoA</text>
        <dbReference type="Rhea" id="RHEA:54728"/>
        <dbReference type="Rhea" id="RHEA-COMP:10505"/>
        <dbReference type="Rhea" id="RHEA-COMP:10506"/>
        <dbReference type="ChEBI" id="CHEBI:57288"/>
        <dbReference type="ChEBI" id="CHEBI:57384"/>
        <dbReference type="ChEBI" id="CHEBI:83144"/>
        <dbReference type="ChEBI" id="CHEBI:83145"/>
        <dbReference type="EC" id="2.1.3.15"/>
    </reaction>
</comment>
<comment type="cofactor">
    <cofactor evidence="1">
        <name>Zn(2+)</name>
        <dbReference type="ChEBI" id="CHEBI:29105"/>
    </cofactor>
    <text evidence="1">Binds 1 zinc ion per subunit.</text>
</comment>
<comment type="pathway">
    <text evidence="1">Lipid metabolism; malonyl-CoA biosynthesis; malonyl-CoA from acetyl-CoA: step 1/1.</text>
</comment>
<comment type="subunit">
    <text evidence="1">Acetyl-CoA carboxylase is a heterohexamer composed of biotin carboxyl carrier protein (AccB), biotin carboxylase (AccC) and two subunits each of ACCase subunit alpha (AccA) and ACCase subunit beta (AccD).</text>
</comment>
<comment type="subcellular location">
    <subcellularLocation>
        <location evidence="1">Cytoplasm</location>
    </subcellularLocation>
</comment>
<comment type="similarity">
    <text evidence="1">Belongs to the AccD/PCCB family.</text>
</comment>
<name>ACCD_SHIB3</name>